<comment type="function">
    <text evidence="1">Catalyzes the stereoinversion of LL-2,6-diaminopimelate (L,L-DAP) to meso-diaminopimelate (meso-DAP), a precursor of L-lysine and an essential component of the bacterial peptidoglycan.</text>
</comment>
<comment type="catalytic activity">
    <reaction evidence="1">
        <text>(2S,6S)-2,6-diaminopimelate = meso-2,6-diaminopimelate</text>
        <dbReference type="Rhea" id="RHEA:15393"/>
        <dbReference type="ChEBI" id="CHEBI:57609"/>
        <dbReference type="ChEBI" id="CHEBI:57791"/>
        <dbReference type="EC" id="5.1.1.7"/>
    </reaction>
</comment>
<comment type="pathway">
    <text evidence="1">Amino-acid biosynthesis; L-lysine biosynthesis via DAP pathway; DL-2,6-diaminopimelate from LL-2,6-diaminopimelate: step 1/1.</text>
</comment>
<comment type="subunit">
    <text evidence="1">Homodimer.</text>
</comment>
<comment type="subcellular location">
    <subcellularLocation>
        <location evidence="1">Cytoplasm</location>
    </subcellularLocation>
</comment>
<comment type="similarity">
    <text evidence="1">Belongs to the diaminopimelate epimerase family.</text>
</comment>
<evidence type="ECO:0000255" key="1">
    <source>
        <dbReference type="HAMAP-Rule" id="MF_00197"/>
    </source>
</evidence>
<proteinExistence type="inferred from homology"/>
<gene>
    <name evidence="1" type="primary">dapF</name>
    <name type="ordered locus">RC0579</name>
</gene>
<name>DAPF_RICCN</name>
<dbReference type="EC" id="5.1.1.7" evidence="1"/>
<dbReference type="EMBL" id="AE006914">
    <property type="protein sequence ID" value="AAL03117.1"/>
    <property type="molecule type" value="Genomic_DNA"/>
</dbReference>
<dbReference type="PIR" id="C97772">
    <property type="entry name" value="C97772"/>
</dbReference>
<dbReference type="RefSeq" id="WP_010977213.1">
    <property type="nucleotide sequence ID" value="NC_003103.1"/>
</dbReference>
<dbReference type="SMR" id="Q92I41"/>
<dbReference type="GeneID" id="927681"/>
<dbReference type="KEGG" id="rco:RC0579"/>
<dbReference type="HOGENOM" id="CLU_053306_1_0_5"/>
<dbReference type="UniPathway" id="UPA00034">
    <property type="reaction ID" value="UER00025"/>
</dbReference>
<dbReference type="Proteomes" id="UP000000816">
    <property type="component" value="Chromosome"/>
</dbReference>
<dbReference type="GO" id="GO:0005829">
    <property type="term" value="C:cytosol"/>
    <property type="evidence" value="ECO:0007669"/>
    <property type="project" value="TreeGrafter"/>
</dbReference>
<dbReference type="GO" id="GO:0008837">
    <property type="term" value="F:diaminopimelate epimerase activity"/>
    <property type="evidence" value="ECO:0007669"/>
    <property type="project" value="UniProtKB-UniRule"/>
</dbReference>
<dbReference type="GO" id="GO:0009089">
    <property type="term" value="P:lysine biosynthetic process via diaminopimelate"/>
    <property type="evidence" value="ECO:0007669"/>
    <property type="project" value="UniProtKB-UniRule"/>
</dbReference>
<dbReference type="Gene3D" id="3.10.310.10">
    <property type="entry name" value="Diaminopimelate Epimerase, Chain A, domain 1"/>
    <property type="match status" value="2"/>
</dbReference>
<dbReference type="HAMAP" id="MF_00197">
    <property type="entry name" value="DAP_epimerase"/>
    <property type="match status" value="1"/>
</dbReference>
<dbReference type="InterPro" id="IPR018510">
    <property type="entry name" value="DAP_epimerase_AS"/>
</dbReference>
<dbReference type="InterPro" id="IPR001653">
    <property type="entry name" value="DAP_epimerase_DapF"/>
</dbReference>
<dbReference type="NCBIfam" id="TIGR00652">
    <property type="entry name" value="DapF"/>
    <property type="match status" value="1"/>
</dbReference>
<dbReference type="PANTHER" id="PTHR31689:SF0">
    <property type="entry name" value="DIAMINOPIMELATE EPIMERASE"/>
    <property type="match status" value="1"/>
</dbReference>
<dbReference type="PANTHER" id="PTHR31689">
    <property type="entry name" value="DIAMINOPIMELATE EPIMERASE, CHLOROPLASTIC"/>
    <property type="match status" value="1"/>
</dbReference>
<dbReference type="Pfam" id="PF01678">
    <property type="entry name" value="DAP_epimerase"/>
    <property type="match status" value="2"/>
</dbReference>
<dbReference type="SUPFAM" id="SSF54506">
    <property type="entry name" value="Diaminopimelate epimerase-like"/>
    <property type="match status" value="2"/>
</dbReference>
<dbReference type="PROSITE" id="PS01326">
    <property type="entry name" value="DAP_EPIMERASE"/>
    <property type="match status" value="1"/>
</dbReference>
<sequence length="270" mass="30058">MISKINFVKMHGLGNDFVIVNKRDLSSSYDLSQLAKNMAERHTGIGCDQFIIYEEHNDFYEMIIYNIDGSSAKLCGNATRCLAKLIYLDTGKQDITVMVGNKKLLCNVNDENNISVNVGSVSFNEAWMPSRDKVWEFAERYMIDLKETICVDIGNPHVVIFSKLEPQDQKIVGERLQAKELFADGVNVNFAEVKDNKIYLSVWERGAGLTLACGSGACGSFAAGLKRGFIHSPSTIVFKHGNLTMKEENGNIIMQGAATLVARGEYYCEQ</sequence>
<accession>Q92I41</accession>
<protein>
    <recommendedName>
        <fullName evidence="1">Diaminopimelate epimerase</fullName>
        <shortName evidence="1">DAP epimerase</shortName>
        <ecNumber evidence="1">5.1.1.7</ecNumber>
    </recommendedName>
    <alternativeName>
        <fullName evidence="1">PLP-independent amino acid racemase</fullName>
    </alternativeName>
</protein>
<organism>
    <name type="scientific">Rickettsia conorii (strain ATCC VR-613 / Malish 7)</name>
    <dbReference type="NCBI Taxonomy" id="272944"/>
    <lineage>
        <taxon>Bacteria</taxon>
        <taxon>Pseudomonadati</taxon>
        <taxon>Pseudomonadota</taxon>
        <taxon>Alphaproteobacteria</taxon>
        <taxon>Rickettsiales</taxon>
        <taxon>Rickettsiaceae</taxon>
        <taxon>Rickettsieae</taxon>
        <taxon>Rickettsia</taxon>
        <taxon>spotted fever group</taxon>
    </lineage>
</organism>
<keyword id="KW-0028">Amino-acid biosynthesis</keyword>
<keyword id="KW-0963">Cytoplasm</keyword>
<keyword id="KW-0413">Isomerase</keyword>
<keyword id="KW-0457">Lysine biosynthesis</keyword>
<reference key="1">
    <citation type="journal article" date="2001" name="Science">
        <title>Mechanisms of evolution in Rickettsia conorii and R. prowazekii.</title>
        <authorList>
            <person name="Ogata H."/>
            <person name="Audic S."/>
            <person name="Renesto-Audiffren P."/>
            <person name="Fournier P.-E."/>
            <person name="Barbe V."/>
            <person name="Samson D."/>
            <person name="Roux V."/>
            <person name="Cossart P."/>
            <person name="Weissenbach J."/>
            <person name="Claverie J.-M."/>
            <person name="Raoult D."/>
        </authorList>
    </citation>
    <scope>NUCLEOTIDE SEQUENCE [LARGE SCALE GENOMIC DNA]</scope>
    <source>
        <strain>ATCC VR-613 / Malish 7</strain>
    </source>
</reference>
<feature type="chain" id="PRO_0000149866" description="Diaminopimelate epimerase">
    <location>
        <begin position="1"/>
        <end position="270"/>
    </location>
</feature>
<feature type="active site" description="Proton donor" evidence="1">
    <location>
        <position position="75"/>
    </location>
</feature>
<feature type="active site" description="Proton acceptor" evidence="1">
    <location>
        <position position="213"/>
    </location>
</feature>
<feature type="binding site" evidence="1">
    <location>
        <position position="15"/>
    </location>
    <ligand>
        <name>substrate</name>
    </ligand>
</feature>
<feature type="binding site" evidence="1">
    <location>
        <position position="49"/>
    </location>
    <ligand>
        <name>substrate</name>
    </ligand>
</feature>
<feature type="binding site" evidence="1">
    <location>
        <position position="66"/>
    </location>
    <ligand>
        <name>substrate</name>
    </ligand>
</feature>
<feature type="binding site" evidence="1">
    <location>
        <begin position="76"/>
        <end position="77"/>
    </location>
    <ligand>
        <name>substrate</name>
    </ligand>
</feature>
<feature type="binding site" evidence="1">
    <location>
        <position position="155"/>
    </location>
    <ligand>
        <name>substrate</name>
    </ligand>
</feature>
<feature type="binding site" evidence="1">
    <location>
        <position position="187"/>
    </location>
    <ligand>
        <name>substrate</name>
    </ligand>
</feature>
<feature type="binding site" evidence="1">
    <location>
        <begin position="204"/>
        <end position="205"/>
    </location>
    <ligand>
        <name>substrate</name>
    </ligand>
</feature>
<feature type="binding site" evidence="1">
    <location>
        <begin position="214"/>
        <end position="215"/>
    </location>
    <ligand>
        <name>substrate</name>
    </ligand>
</feature>
<feature type="site" description="Could be important to modulate the pK values of the two catalytic cysteine residues" evidence="1">
    <location>
        <position position="157"/>
    </location>
</feature>
<feature type="site" description="Could be important to modulate the pK values of the two catalytic cysteine residues" evidence="1">
    <location>
        <position position="204"/>
    </location>
</feature>